<gene>
    <name type="ordered locus">BruAb2_0341</name>
</gene>
<organism>
    <name type="scientific">Brucella abortus biovar 1 (strain 9-941)</name>
    <dbReference type="NCBI Taxonomy" id="262698"/>
    <lineage>
        <taxon>Bacteria</taxon>
        <taxon>Pseudomonadati</taxon>
        <taxon>Pseudomonadota</taxon>
        <taxon>Alphaproteobacteria</taxon>
        <taxon>Hyphomicrobiales</taxon>
        <taxon>Brucellaceae</taxon>
        <taxon>Brucella/Ochrobactrum group</taxon>
        <taxon>Brucella</taxon>
    </lineage>
</organism>
<sequence>MDDKVETGNIDVRLLELLVCPLTKGPLEYDAERSELVSRKARLAYPVRGGIPIMLPSEARSLTE</sequence>
<protein>
    <recommendedName>
        <fullName evidence="1">UPF0434 protein BruAb2_0341</fullName>
    </recommendedName>
</protein>
<evidence type="ECO:0000255" key="1">
    <source>
        <dbReference type="HAMAP-Rule" id="MF_01187"/>
    </source>
</evidence>
<feature type="chain" id="PRO_0000291067" description="UPF0434 protein BruAb2_0341">
    <location>
        <begin position="1"/>
        <end position="64"/>
    </location>
</feature>
<dbReference type="EMBL" id="AE017224">
    <property type="protein sequence ID" value="AAX75772.1"/>
    <property type="molecule type" value="Genomic_DNA"/>
</dbReference>
<dbReference type="RefSeq" id="WP_002965755.1">
    <property type="nucleotide sequence ID" value="NC_006933.1"/>
</dbReference>
<dbReference type="SMR" id="Q579B2"/>
<dbReference type="EnsemblBacteria" id="AAX75772">
    <property type="protein sequence ID" value="AAX75772"/>
    <property type="gene ID" value="BruAb2_0341"/>
</dbReference>
<dbReference type="KEGG" id="bmb:BruAb2_0341"/>
<dbReference type="HOGENOM" id="CLU_155659_2_2_5"/>
<dbReference type="Proteomes" id="UP000000540">
    <property type="component" value="Chromosome II"/>
</dbReference>
<dbReference type="GO" id="GO:0005829">
    <property type="term" value="C:cytosol"/>
    <property type="evidence" value="ECO:0007669"/>
    <property type="project" value="TreeGrafter"/>
</dbReference>
<dbReference type="FunFam" id="2.20.25.10:FF:000002">
    <property type="entry name" value="UPF0434 protein YcaR"/>
    <property type="match status" value="1"/>
</dbReference>
<dbReference type="Gene3D" id="2.20.25.10">
    <property type="match status" value="1"/>
</dbReference>
<dbReference type="HAMAP" id="MF_01187">
    <property type="entry name" value="UPF0434"/>
    <property type="match status" value="1"/>
</dbReference>
<dbReference type="InterPro" id="IPR005651">
    <property type="entry name" value="Trm112-like"/>
</dbReference>
<dbReference type="PANTHER" id="PTHR33505:SF4">
    <property type="entry name" value="PROTEIN PREY, MITOCHONDRIAL"/>
    <property type="match status" value="1"/>
</dbReference>
<dbReference type="PANTHER" id="PTHR33505">
    <property type="entry name" value="ZGC:162634"/>
    <property type="match status" value="1"/>
</dbReference>
<dbReference type="Pfam" id="PF03966">
    <property type="entry name" value="Trm112p"/>
    <property type="match status" value="1"/>
</dbReference>
<dbReference type="SUPFAM" id="SSF158997">
    <property type="entry name" value="Trm112p-like"/>
    <property type="match status" value="1"/>
</dbReference>
<comment type="similarity">
    <text evidence="1">Belongs to the UPF0434 family.</text>
</comment>
<name>Y2641_BRUAB</name>
<reference key="1">
    <citation type="journal article" date="2005" name="J. Bacteriol.">
        <title>Completion of the genome sequence of Brucella abortus and comparison to the highly similar genomes of Brucella melitensis and Brucella suis.</title>
        <authorList>
            <person name="Halling S.M."/>
            <person name="Peterson-Burch B.D."/>
            <person name="Bricker B.J."/>
            <person name="Zuerner R.L."/>
            <person name="Qing Z."/>
            <person name="Li L.-L."/>
            <person name="Kapur V."/>
            <person name="Alt D.P."/>
            <person name="Olsen S.C."/>
        </authorList>
    </citation>
    <scope>NUCLEOTIDE SEQUENCE [LARGE SCALE GENOMIC DNA]</scope>
    <source>
        <strain>9-941</strain>
    </source>
</reference>
<accession>Q579B2</accession>
<proteinExistence type="inferred from homology"/>